<evidence type="ECO:0000250" key="1"/>
<evidence type="ECO:0000255" key="2">
    <source>
        <dbReference type="PROSITE-ProRule" id="PRU00194"/>
    </source>
</evidence>
<evidence type="ECO:0000256" key="3">
    <source>
        <dbReference type="SAM" id="MobiDB-lite"/>
    </source>
</evidence>
<evidence type="ECO:0000303" key="4">
    <source>
    </source>
</evidence>
<evidence type="ECO:0000305" key="5"/>
<feature type="chain" id="PRO_0000051460" description="WD repeat and SOCS box-containing protein 2">
    <location>
        <begin position="1"/>
        <end position="404"/>
    </location>
</feature>
<feature type="repeat" description="WD 1">
    <location>
        <begin position="16"/>
        <end position="55"/>
    </location>
</feature>
<feature type="repeat" description="WD 2">
    <location>
        <begin position="81"/>
        <end position="140"/>
    </location>
</feature>
<feature type="repeat" description="WD 3">
    <location>
        <begin position="144"/>
        <end position="183"/>
    </location>
</feature>
<feature type="repeat" description="WD 4">
    <location>
        <begin position="188"/>
        <end position="226"/>
    </location>
</feature>
<feature type="repeat" description="WD 5">
    <location>
        <begin position="230"/>
        <end position="268"/>
    </location>
</feature>
<feature type="repeat" description="WD 6">
    <location>
        <begin position="283"/>
        <end position="322"/>
    </location>
</feature>
<feature type="repeat" description="WD 7">
    <location>
        <begin position="325"/>
        <end position="362"/>
    </location>
</feature>
<feature type="domain" description="SOCS box" evidence="2">
    <location>
        <begin position="356"/>
        <end position="404"/>
    </location>
</feature>
<feature type="region of interest" description="Disordered" evidence="3">
    <location>
        <begin position="68"/>
        <end position="87"/>
    </location>
</feature>
<feature type="splice variant" id="VSP_054576" description="In isoform 3." evidence="4">
    <location>
        <begin position="1"/>
        <end position="210"/>
    </location>
</feature>
<feature type="splice variant" id="VSP_054016" description="In isoform 2." evidence="4">
    <original>MEAG</original>
    <variation>MRVDRESRFLRGTGTGEAVAV</variation>
    <location>
        <begin position="1"/>
        <end position="4"/>
    </location>
</feature>
<feature type="sequence conflict" description="In Ref. 2; AAF80478." evidence="5" ref="2">
    <original>E</original>
    <variation>K</variation>
    <location>
        <position position="5"/>
    </location>
</feature>
<feature type="sequence conflict" description="In Ref. 2; AAF80478." evidence="5" ref="2">
    <original>PWP</original>
    <variation>LCL</variation>
    <location>
        <begin position="101"/>
        <end position="103"/>
    </location>
</feature>
<protein>
    <recommendedName>
        <fullName>WD repeat and SOCS box-containing protein 2</fullName>
        <shortName>WSB-2</shortName>
    </recommendedName>
    <alternativeName>
        <fullName>CS box-containing WD protein</fullName>
    </alternativeName>
</protein>
<sequence length="404" mass="45286">MEAGEEPLLLAELKPGRPHQFDWKSSCETWSVAFSPDGSWFAWSQGHCIVKLIPWPLEEQFIPKGFEAKSRSSKNETKGRGSPKEKTLDCGQIVWGLAFSPWPSPPSRKLWARHHPQVPDVSCLVLATGLNDGQIKIWEVQTGLLLLNLSGHQDVVRDLSFTPSGSLILVSASRDKTLRIWDLNKHGKQIQVLSGHLQWVYCCSISPDCSMLCSAAGEKSVFLWSMRSYTLIRKLEGHQSSVVSCDFSPDSALLVTASYDTNVIMWDPYTGERLRSLHHTQVDPAMDDSDVHISSLRSVCFSPEGLYLATVADDRLLRIWALELKTPIAFAPMTNGLCCTFFPHGGVIATGTRDGHVQFWTAPRVLSSLKHLCRKALRSFLTTYQVLALPIPKKMKEFLTYRTF</sequence>
<gene>
    <name type="primary">WSB2</name>
</gene>
<name>WSB2_HUMAN</name>
<comment type="function">
    <text evidence="1">May be a substrate-recognition component of a SCF-like ECS (Elongin-Cullin-SOCS-box protein) E3 ubiquitin ligase complex which mediates the ubiquitination and subsequent proteasomal degradation of target proteins.</text>
</comment>
<comment type="pathway">
    <text>Protein modification; protein ubiquitination.</text>
</comment>
<comment type="interaction">
    <interactant intactId="EBI-719743">
        <id>Q9NYS7</id>
    </interactant>
    <interactant intactId="EBI-359873">
        <id>Q9UHV9</id>
        <label>PFDN2</label>
    </interactant>
    <organismsDiffer>false</organismsDiffer>
    <experiments>2</experiments>
</comment>
<comment type="alternative products">
    <event type="alternative splicing"/>
    <isoform>
        <id>Q9NYS7-1</id>
        <name>1</name>
        <sequence type="displayed"/>
    </isoform>
    <isoform>
        <id>Q9NYS7-2</id>
        <name>2</name>
        <sequence type="described" ref="VSP_054016"/>
    </isoform>
    <isoform>
        <id>Q9NYS7-3</id>
        <name>3</name>
        <sequence type="described" ref="VSP_054576"/>
    </isoform>
</comment>
<comment type="domain">
    <text evidence="1">The SOCS box domain mediates the interaction with the Elongin BC complex, an adapter module in different E3 ubiquitin ligase complexes.</text>
</comment>
<dbReference type="EMBL" id="AF229181">
    <property type="protein sequence ID" value="AAF71302.1"/>
    <property type="molecule type" value="mRNA"/>
</dbReference>
<dbReference type="EMBL" id="AF163324">
    <property type="protein sequence ID" value="AAF80478.1"/>
    <property type="molecule type" value="mRNA"/>
</dbReference>
<dbReference type="EMBL" id="AK295555">
    <property type="protein sequence ID" value="BAG58458.1"/>
    <property type="molecule type" value="mRNA"/>
</dbReference>
<dbReference type="EMBL" id="AK298513">
    <property type="protein sequence ID" value="BAG60718.1"/>
    <property type="molecule type" value="mRNA"/>
</dbReference>
<dbReference type="EMBL" id="AC131159">
    <property type="status" value="NOT_ANNOTATED_CDS"/>
    <property type="molecule type" value="Genomic_DNA"/>
</dbReference>
<dbReference type="EMBL" id="AC131238">
    <property type="status" value="NOT_ANNOTATED_CDS"/>
    <property type="molecule type" value="Genomic_DNA"/>
</dbReference>
<dbReference type="EMBL" id="BC015887">
    <property type="protein sequence ID" value="AAH15887.1"/>
    <property type="molecule type" value="mRNA"/>
</dbReference>
<dbReference type="CCDS" id="CCDS61251.1">
    <molecule id="Q9NYS7-3"/>
</dbReference>
<dbReference type="CCDS" id="CCDS61252.1">
    <molecule id="Q9NYS7-2"/>
</dbReference>
<dbReference type="CCDS" id="CCDS9186.1">
    <molecule id="Q9NYS7-1"/>
</dbReference>
<dbReference type="RefSeq" id="NP_001265486.1">
    <molecule id="Q9NYS7-2"/>
    <property type="nucleotide sequence ID" value="NM_001278557.1"/>
</dbReference>
<dbReference type="RefSeq" id="NP_001265487.1">
    <molecule id="Q9NYS7-3"/>
    <property type="nucleotide sequence ID" value="NM_001278558.2"/>
</dbReference>
<dbReference type="RefSeq" id="NP_061109.1">
    <molecule id="Q9NYS7-1"/>
    <property type="nucleotide sequence ID" value="NM_018639.5"/>
</dbReference>
<dbReference type="RefSeq" id="XP_016875131.1">
    <property type="nucleotide sequence ID" value="XM_017019642.1"/>
</dbReference>
<dbReference type="SMR" id="Q9NYS7"/>
<dbReference type="BioGRID" id="120976">
    <property type="interactions" value="86"/>
</dbReference>
<dbReference type="FunCoup" id="Q9NYS7">
    <property type="interactions" value="515"/>
</dbReference>
<dbReference type="IntAct" id="Q9NYS7">
    <property type="interactions" value="41"/>
</dbReference>
<dbReference type="STRING" id="9606.ENSP00000409131"/>
<dbReference type="PhosphoSitePlus" id="Q9NYS7"/>
<dbReference type="BioMuta" id="WSB2"/>
<dbReference type="DMDM" id="20532294"/>
<dbReference type="jPOST" id="Q9NYS7"/>
<dbReference type="MassIVE" id="Q9NYS7"/>
<dbReference type="PaxDb" id="9606-ENSP00000409131"/>
<dbReference type="PeptideAtlas" id="Q9NYS7"/>
<dbReference type="ProteomicsDB" id="4299"/>
<dbReference type="ProteomicsDB" id="4819"/>
<dbReference type="ProteomicsDB" id="83273">
    <molecule id="Q9NYS7-1"/>
</dbReference>
<dbReference type="Pumba" id="Q9NYS7"/>
<dbReference type="Antibodypedia" id="31364">
    <property type="antibodies" value="97 antibodies from 26 providers"/>
</dbReference>
<dbReference type="DNASU" id="55884"/>
<dbReference type="Ensembl" id="ENST00000315436.8">
    <molecule id="Q9NYS7-1"/>
    <property type="protein sequence ID" value="ENSP00000319474.3"/>
    <property type="gene ID" value="ENSG00000176871.9"/>
</dbReference>
<dbReference type="Ensembl" id="ENST00000441406.6">
    <molecule id="Q9NYS7-2"/>
    <property type="protein sequence ID" value="ENSP00000409131.2"/>
    <property type="gene ID" value="ENSG00000176871.9"/>
</dbReference>
<dbReference type="Ensembl" id="ENST00000544233.5">
    <molecule id="Q9NYS7-3"/>
    <property type="protein sequence ID" value="ENSP00000444431.1"/>
    <property type="gene ID" value="ENSG00000176871.9"/>
</dbReference>
<dbReference type="GeneID" id="55884"/>
<dbReference type="KEGG" id="hsa:55884"/>
<dbReference type="MANE-Select" id="ENST00000315436.8">
    <property type="protein sequence ID" value="ENSP00000319474.3"/>
    <property type="RefSeq nucleotide sequence ID" value="NM_018639.5"/>
    <property type="RefSeq protein sequence ID" value="NP_061109.1"/>
</dbReference>
<dbReference type="UCSC" id="uc001twr.4">
    <molecule id="Q9NYS7-1"/>
    <property type="organism name" value="human"/>
</dbReference>
<dbReference type="AGR" id="HGNC:19222"/>
<dbReference type="CTD" id="55884"/>
<dbReference type="DisGeNET" id="55884"/>
<dbReference type="GeneCards" id="WSB2"/>
<dbReference type="HGNC" id="HGNC:19222">
    <property type="gene designation" value="WSB2"/>
</dbReference>
<dbReference type="HPA" id="ENSG00000176871">
    <property type="expression patterns" value="Low tissue specificity"/>
</dbReference>
<dbReference type="neXtProt" id="NX_Q9NYS7"/>
<dbReference type="OpenTargets" id="ENSG00000176871"/>
<dbReference type="PharmGKB" id="PA128395787"/>
<dbReference type="VEuPathDB" id="HostDB:ENSG00000176871"/>
<dbReference type="eggNOG" id="KOG0266">
    <property type="taxonomic scope" value="Eukaryota"/>
</dbReference>
<dbReference type="GeneTree" id="ENSGT00890000139406"/>
<dbReference type="HOGENOM" id="CLU_1401984_0_0_1"/>
<dbReference type="InParanoid" id="Q9NYS7"/>
<dbReference type="OMA" id="GDTDPAC"/>
<dbReference type="OrthoDB" id="538223at2759"/>
<dbReference type="PAN-GO" id="Q9NYS7">
    <property type="GO annotations" value="1 GO annotation based on evolutionary models"/>
</dbReference>
<dbReference type="PhylomeDB" id="Q9NYS7"/>
<dbReference type="TreeFam" id="TF329216"/>
<dbReference type="PathwayCommons" id="Q9NYS7"/>
<dbReference type="Reactome" id="R-HSA-8951664">
    <property type="pathway name" value="Neddylation"/>
</dbReference>
<dbReference type="SignaLink" id="Q9NYS7"/>
<dbReference type="UniPathway" id="UPA00143"/>
<dbReference type="BioGRID-ORCS" id="55884">
    <property type="hits" value="32 hits in 1203 CRISPR screens"/>
</dbReference>
<dbReference type="ChiTaRS" id="WSB2">
    <property type="organism name" value="human"/>
</dbReference>
<dbReference type="GenomeRNAi" id="55884"/>
<dbReference type="Pharos" id="Q9NYS7">
    <property type="development level" value="Tbio"/>
</dbReference>
<dbReference type="PRO" id="PR:Q9NYS7"/>
<dbReference type="Proteomes" id="UP000005640">
    <property type="component" value="Chromosome 12"/>
</dbReference>
<dbReference type="RNAct" id="Q9NYS7">
    <property type="molecule type" value="protein"/>
</dbReference>
<dbReference type="Bgee" id="ENSG00000176871">
    <property type="expression patterns" value="Expressed in superior frontal gyrus and 211 other cell types or tissues"/>
</dbReference>
<dbReference type="ExpressionAtlas" id="Q9NYS7">
    <property type="expression patterns" value="baseline and differential"/>
</dbReference>
<dbReference type="GO" id="GO:0005829">
    <property type="term" value="C:cytosol"/>
    <property type="evidence" value="ECO:0000304"/>
    <property type="project" value="Reactome"/>
</dbReference>
<dbReference type="GO" id="GO:0035556">
    <property type="term" value="P:intracellular signal transduction"/>
    <property type="evidence" value="ECO:0007669"/>
    <property type="project" value="InterPro"/>
</dbReference>
<dbReference type="GO" id="GO:0000209">
    <property type="term" value="P:protein polyubiquitination"/>
    <property type="evidence" value="ECO:0000318"/>
    <property type="project" value="GO_Central"/>
</dbReference>
<dbReference type="CDD" id="cd03733">
    <property type="entry name" value="SOCS_WSB_SWIP"/>
    <property type="match status" value="1"/>
</dbReference>
<dbReference type="CDD" id="cd00200">
    <property type="entry name" value="WD40"/>
    <property type="match status" value="1"/>
</dbReference>
<dbReference type="FunFam" id="2.130.10.10:FF:000256">
    <property type="entry name" value="WD repeat and SOCS box containing 2"/>
    <property type="match status" value="1"/>
</dbReference>
<dbReference type="FunFam" id="2.130.10.10:FF:000264">
    <property type="entry name" value="WD repeat and SOCS box containing 2"/>
    <property type="match status" value="1"/>
</dbReference>
<dbReference type="Gene3D" id="1.10.750.20">
    <property type="entry name" value="SOCS box"/>
    <property type="match status" value="1"/>
</dbReference>
<dbReference type="Gene3D" id="2.130.10.10">
    <property type="entry name" value="YVTN repeat-like/Quinoprotein amine dehydrogenase"/>
    <property type="match status" value="3"/>
</dbReference>
<dbReference type="InterPro" id="IPR020472">
    <property type="entry name" value="G-protein_beta_WD-40_rep"/>
</dbReference>
<dbReference type="InterPro" id="IPR001496">
    <property type="entry name" value="SOCS_box"/>
</dbReference>
<dbReference type="InterPro" id="IPR036036">
    <property type="entry name" value="SOCS_box-like_dom_sf"/>
</dbReference>
<dbReference type="InterPro" id="IPR015943">
    <property type="entry name" value="WD40/YVTN_repeat-like_dom_sf"/>
</dbReference>
<dbReference type="InterPro" id="IPR019775">
    <property type="entry name" value="WD40_repeat_CS"/>
</dbReference>
<dbReference type="InterPro" id="IPR036322">
    <property type="entry name" value="WD40_repeat_dom_sf"/>
</dbReference>
<dbReference type="InterPro" id="IPR001680">
    <property type="entry name" value="WD40_rpt"/>
</dbReference>
<dbReference type="InterPro" id="IPR051983">
    <property type="entry name" value="WSB_SOCS-box_domain"/>
</dbReference>
<dbReference type="PANTHER" id="PTHR15622:SF1">
    <property type="entry name" value="WD REPEAT AND SOCS BOX-CONTAINING PROTEIN 2"/>
    <property type="match status" value="1"/>
</dbReference>
<dbReference type="PANTHER" id="PTHR15622">
    <property type="entry name" value="WD40 REPEAT PROTEIN"/>
    <property type="match status" value="1"/>
</dbReference>
<dbReference type="Pfam" id="PF07525">
    <property type="entry name" value="SOCS_box"/>
    <property type="match status" value="1"/>
</dbReference>
<dbReference type="Pfam" id="PF00400">
    <property type="entry name" value="WD40"/>
    <property type="match status" value="5"/>
</dbReference>
<dbReference type="PRINTS" id="PR00320">
    <property type="entry name" value="GPROTEINBRPT"/>
</dbReference>
<dbReference type="SMART" id="SM00253">
    <property type="entry name" value="SOCS"/>
    <property type="match status" value="1"/>
</dbReference>
<dbReference type="SMART" id="SM00969">
    <property type="entry name" value="SOCS_box"/>
    <property type="match status" value="1"/>
</dbReference>
<dbReference type="SMART" id="SM00320">
    <property type="entry name" value="WD40"/>
    <property type="match status" value="6"/>
</dbReference>
<dbReference type="SUPFAM" id="SSF158235">
    <property type="entry name" value="SOCS box-like"/>
    <property type="match status" value="1"/>
</dbReference>
<dbReference type="SUPFAM" id="SSF50978">
    <property type="entry name" value="WD40 repeat-like"/>
    <property type="match status" value="1"/>
</dbReference>
<dbReference type="PROSITE" id="PS50225">
    <property type="entry name" value="SOCS"/>
    <property type="match status" value="1"/>
</dbReference>
<dbReference type="PROSITE" id="PS00678">
    <property type="entry name" value="WD_REPEATS_1"/>
    <property type="match status" value="2"/>
</dbReference>
<dbReference type="PROSITE" id="PS50082">
    <property type="entry name" value="WD_REPEATS_2"/>
    <property type="match status" value="5"/>
</dbReference>
<dbReference type="PROSITE" id="PS50294">
    <property type="entry name" value="WD_REPEATS_REGION"/>
    <property type="match status" value="1"/>
</dbReference>
<proteinExistence type="evidence at protein level"/>
<keyword id="KW-0025">Alternative splicing</keyword>
<keyword id="KW-1267">Proteomics identification</keyword>
<keyword id="KW-1185">Reference proteome</keyword>
<keyword id="KW-0677">Repeat</keyword>
<keyword id="KW-0833">Ubl conjugation pathway</keyword>
<keyword id="KW-0853">WD repeat</keyword>
<accession>Q9NYS7</accession>
<accession>B4DIE6</accession>
<accession>B4DPV6</accession>
<accession>Q9NRX9</accession>
<organism>
    <name type="scientific">Homo sapiens</name>
    <name type="common">Human</name>
    <dbReference type="NCBI Taxonomy" id="9606"/>
    <lineage>
        <taxon>Eukaryota</taxon>
        <taxon>Metazoa</taxon>
        <taxon>Chordata</taxon>
        <taxon>Craniata</taxon>
        <taxon>Vertebrata</taxon>
        <taxon>Euteleostomi</taxon>
        <taxon>Mammalia</taxon>
        <taxon>Eutheria</taxon>
        <taxon>Euarchontoglires</taxon>
        <taxon>Primates</taxon>
        <taxon>Haplorrhini</taxon>
        <taxon>Catarrhini</taxon>
        <taxon>Hominidae</taxon>
        <taxon>Homo</taxon>
    </lineage>
</organism>
<reference key="1">
    <citation type="submission" date="2000-01" db="EMBL/GenBank/DDBJ databases">
        <title>cDNA cloning of a up-regulated SOCS box-containing WD protein in human colonic cancer cells induced by sodium butyrate.</title>
        <authorList>
            <person name="Li F."/>
            <person name="Song J."/>
        </authorList>
    </citation>
    <scope>NUCLEOTIDE SEQUENCE [MRNA] (ISOFORM 1)</scope>
    <source>
        <tissue>Colon carcinoma</tissue>
    </source>
</reference>
<reference key="2">
    <citation type="submission" date="1999-06" db="EMBL/GenBank/DDBJ databases">
        <title>Human full-length cDNA cloned from NB4 cell line induced from all trans retinoid acid.</title>
        <authorList>
            <person name="Zhang J.W."/>
            <person name="Liu T.X."/>
            <person name="Tao J."/>
        </authorList>
    </citation>
    <scope>NUCLEOTIDE SEQUENCE [MRNA] (ISOFORM 1)</scope>
</reference>
<reference key="3">
    <citation type="journal article" date="2004" name="Nat. Genet.">
        <title>Complete sequencing and characterization of 21,243 full-length human cDNAs.</title>
        <authorList>
            <person name="Ota T."/>
            <person name="Suzuki Y."/>
            <person name="Nishikawa T."/>
            <person name="Otsuki T."/>
            <person name="Sugiyama T."/>
            <person name="Irie R."/>
            <person name="Wakamatsu A."/>
            <person name="Hayashi K."/>
            <person name="Sato H."/>
            <person name="Nagai K."/>
            <person name="Kimura K."/>
            <person name="Makita H."/>
            <person name="Sekine M."/>
            <person name="Obayashi M."/>
            <person name="Nishi T."/>
            <person name="Shibahara T."/>
            <person name="Tanaka T."/>
            <person name="Ishii S."/>
            <person name="Yamamoto J."/>
            <person name="Saito K."/>
            <person name="Kawai Y."/>
            <person name="Isono Y."/>
            <person name="Nakamura Y."/>
            <person name="Nagahari K."/>
            <person name="Murakami K."/>
            <person name="Yasuda T."/>
            <person name="Iwayanagi T."/>
            <person name="Wagatsuma M."/>
            <person name="Shiratori A."/>
            <person name="Sudo H."/>
            <person name="Hosoiri T."/>
            <person name="Kaku Y."/>
            <person name="Kodaira H."/>
            <person name="Kondo H."/>
            <person name="Sugawara M."/>
            <person name="Takahashi M."/>
            <person name="Kanda K."/>
            <person name="Yokoi T."/>
            <person name="Furuya T."/>
            <person name="Kikkawa E."/>
            <person name="Omura Y."/>
            <person name="Abe K."/>
            <person name="Kamihara K."/>
            <person name="Katsuta N."/>
            <person name="Sato K."/>
            <person name="Tanikawa M."/>
            <person name="Yamazaki M."/>
            <person name="Ninomiya K."/>
            <person name="Ishibashi T."/>
            <person name="Yamashita H."/>
            <person name="Murakawa K."/>
            <person name="Fujimori K."/>
            <person name="Tanai H."/>
            <person name="Kimata M."/>
            <person name="Watanabe M."/>
            <person name="Hiraoka S."/>
            <person name="Chiba Y."/>
            <person name="Ishida S."/>
            <person name="Ono Y."/>
            <person name="Takiguchi S."/>
            <person name="Watanabe S."/>
            <person name="Yosida M."/>
            <person name="Hotuta T."/>
            <person name="Kusano J."/>
            <person name="Kanehori K."/>
            <person name="Takahashi-Fujii A."/>
            <person name="Hara H."/>
            <person name="Tanase T.-O."/>
            <person name="Nomura Y."/>
            <person name="Togiya S."/>
            <person name="Komai F."/>
            <person name="Hara R."/>
            <person name="Takeuchi K."/>
            <person name="Arita M."/>
            <person name="Imose N."/>
            <person name="Musashino K."/>
            <person name="Yuuki H."/>
            <person name="Oshima A."/>
            <person name="Sasaki N."/>
            <person name="Aotsuka S."/>
            <person name="Yoshikawa Y."/>
            <person name="Matsunawa H."/>
            <person name="Ichihara T."/>
            <person name="Shiohata N."/>
            <person name="Sano S."/>
            <person name="Moriya S."/>
            <person name="Momiyama H."/>
            <person name="Satoh N."/>
            <person name="Takami S."/>
            <person name="Terashima Y."/>
            <person name="Suzuki O."/>
            <person name="Nakagawa S."/>
            <person name="Senoh A."/>
            <person name="Mizoguchi H."/>
            <person name="Goto Y."/>
            <person name="Shimizu F."/>
            <person name="Wakebe H."/>
            <person name="Hishigaki H."/>
            <person name="Watanabe T."/>
            <person name="Sugiyama A."/>
            <person name="Takemoto M."/>
            <person name="Kawakami B."/>
            <person name="Yamazaki M."/>
            <person name="Watanabe K."/>
            <person name="Kumagai A."/>
            <person name="Itakura S."/>
            <person name="Fukuzumi Y."/>
            <person name="Fujimori Y."/>
            <person name="Komiyama M."/>
            <person name="Tashiro H."/>
            <person name="Tanigami A."/>
            <person name="Fujiwara T."/>
            <person name="Ono T."/>
            <person name="Yamada K."/>
            <person name="Fujii Y."/>
            <person name="Ozaki K."/>
            <person name="Hirao M."/>
            <person name="Ohmori Y."/>
            <person name="Kawabata A."/>
            <person name="Hikiji T."/>
            <person name="Kobatake N."/>
            <person name="Inagaki H."/>
            <person name="Ikema Y."/>
            <person name="Okamoto S."/>
            <person name="Okitani R."/>
            <person name="Kawakami T."/>
            <person name="Noguchi S."/>
            <person name="Itoh T."/>
            <person name="Shigeta K."/>
            <person name="Senba T."/>
            <person name="Matsumura K."/>
            <person name="Nakajima Y."/>
            <person name="Mizuno T."/>
            <person name="Morinaga M."/>
            <person name="Sasaki M."/>
            <person name="Togashi T."/>
            <person name="Oyama M."/>
            <person name="Hata H."/>
            <person name="Watanabe M."/>
            <person name="Komatsu T."/>
            <person name="Mizushima-Sugano J."/>
            <person name="Satoh T."/>
            <person name="Shirai Y."/>
            <person name="Takahashi Y."/>
            <person name="Nakagawa K."/>
            <person name="Okumura K."/>
            <person name="Nagase T."/>
            <person name="Nomura N."/>
            <person name="Kikuchi H."/>
            <person name="Masuho Y."/>
            <person name="Yamashita R."/>
            <person name="Nakai K."/>
            <person name="Yada T."/>
            <person name="Nakamura Y."/>
            <person name="Ohara O."/>
            <person name="Isogai T."/>
            <person name="Sugano S."/>
        </authorList>
    </citation>
    <scope>NUCLEOTIDE SEQUENCE [LARGE SCALE MRNA] (ISOFORMS 2 AND 3)</scope>
    <source>
        <tissue>Hippocampus</tissue>
    </source>
</reference>
<reference key="4">
    <citation type="journal article" date="2006" name="Nature">
        <title>The finished DNA sequence of human chromosome 12.</title>
        <authorList>
            <person name="Scherer S.E."/>
            <person name="Muzny D.M."/>
            <person name="Buhay C.J."/>
            <person name="Chen R."/>
            <person name="Cree A."/>
            <person name="Ding Y."/>
            <person name="Dugan-Rocha S."/>
            <person name="Gill R."/>
            <person name="Gunaratne P."/>
            <person name="Harris R.A."/>
            <person name="Hawes A.C."/>
            <person name="Hernandez J."/>
            <person name="Hodgson A.V."/>
            <person name="Hume J."/>
            <person name="Jackson A."/>
            <person name="Khan Z.M."/>
            <person name="Kovar-Smith C."/>
            <person name="Lewis L.R."/>
            <person name="Lozado R.J."/>
            <person name="Metzker M.L."/>
            <person name="Milosavljevic A."/>
            <person name="Miner G.R."/>
            <person name="Montgomery K.T."/>
            <person name="Morgan M.B."/>
            <person name="Nazareth L.V."/>
            <person name="Scott G."/>
            <person name="Sodergren E."/>
            <person name="Song X.-Z."/>
            <person name="Steffen D."/>
            <person name="Lovering R.C."/>
            <person name="Wheeler D.A."/>
            <person name="Worley K.C."/>
            <person name="Yuan Y."/>
            <person name="Zhang Z."/>
            <person name="Adams C.Q."/>
            <person name="Ansari-Lari M.A."/>
            <person name="Ayele M."/>
            <person name="Brown M.J."/>
            <person name="Chen G."/>
            <person name="Chen Z."/>
            <person name="Clerc-Blankenburg K.P."/>
            <person name="Davis C."/>
            <person name="Delgado O."/>
            <person name="Dinh H.H."/>
            <person name="Draper H."/>
            <person name="Gonzalez-Garay M.L."/>
            <person name="Havlak P."/>
            <person name="Jackson L.R."/>
            <person name="Jacob L.S."/>
            <person name="Kelly S.H."/>
            <person name="Li L."/>
            <person name="Li Z."/>
            <person name="Liu J."/>
            <person name="Liu W."/>
            <person name="Lu J."/>
            <person name="Maheshwari M."/>
            <person name="Nguyen B.-V."/>
            <person name="Okwuonu G.O."/>
            <person name="Pasternak S."/>
            <person name="Perez L.M."/>
            <person name="Plopper F.J.H."/>
            <person name="Santibanez J."/>
            <person name="Shen H."/>
            <person name="Tabor P.E."/>
            <person name="Verduzco D."/>
            <person name="Waldron L."/>
            <person name="Wang Q."/>
            <person name="Williams G.A."/>
            <person name="Zhang J."/>
            <person name="Zhou J."/>
            <person name="Allen C.C."/>
            <person name="Amin A.G."/>
            <person name="Anyalebechi V."/>
            <person name="Bailey M."/>
            <person name="Barbaria J.A."/>
            <person name="Bimage K.E."/>
            <person name="Bryant N.P."/>
            <person name="Burch P.E."/>
            <person name="Burkett C.E."/>
            <person name="Burrell K.L."/>
            <person name="Calderon E."/>
            <person name="Cardenas V."/>
            <person name="Carter K."/>
            <person name="Casias K."/>
            <person name="Cavazos I."/>
            <person name="Cavazos S.R."/>
            <person name="Ceasar H."/>
            <person name="Chacko J."/>
            <person name="Chan S.N."/>
            <person name="Chavez D."/>
            <person name="Christopoulos C."/>
            <person name="Chu J."/>
            <person name="Cockrell R."/>
            <person name="Cox C.D."/>
            <person name="Dang M."/>
            <person name="Dathorne S.R."/>
            <person name="David R."/>
            <person name="Davis C.M."/>
            <person name="Davy-Carroll L."/>
            <person name="Deshazo D.R."/>
            <person name="Donlin J.E."/>
            <person name="D'Souza L."/>
            <person name="Eaves K.A."/>
            <person name="Egan A."/>
            <person name="Emery-Cohen A.J."/>
            <person name="Escotto M."/>
            <person name="Flagg N."/>
            <person name="Forbes L.D."/>
            <person name="Gabisi A.M."/>
            <person name="Garza M."/>
            <person name="Hamilton C."/>
            <person name="Henderson N."/>
            <person name="Hernandez O."/>
            <person name="Hines S."/>
            <person name="Hogues M.E."/>
            <person name="Huang M."/>
            <person name="Idlebird D.G."/>
            <person name="Johnson R."/>
            <person name="Jolivet A."/>
            <person name="Jones S."/>
            <person name="Kagan R."/>
            <person name="King L.M."/>
            <person name="Leal B."/>
            <person name="Lebow H."/>
            <person name="Lee S."/>
            <person name="LeVan J.M."/>
            <person name="Lewis L.C."/>
            <person name="London P."/>
            <person name="Lorensuhewa L.M."/>
            <person name="Loulseged H."/>
            <person name="Lovett D.A."/>
            <person name="Lucier A."/>
            <person name="Lucier R.L."/>
            <person name="Ma J."/>
            <person name="Madu R.C."/>
            <person name="Mapua P."/>
            <person name="Martindale A.D."/>
            <person name="Martinez E."/>
            <person name="Massey E."/>
            <person name="Mawhiney S."/>
            <person name="Meador M.G."/>
            <person name="Mendez S."/>
            <person name="Mercado C."/>
            <person name="Mercado I.C."/>
            <person name="Merritt C.E."/>
            <person name="Miner Z.L."/>
            <person name="Minja E."/>
            <person name="Mitchell T."/>
            <person name="Mohabbat F."/>
            <person name="Mohabbat K."/>
            <person name="Montgomery B."/>
            <person name="Moore N."/>
            <person name="Morris S."/>
            <person name="Munidasa M."/>
            <person name="Ngo R.N."/>
            <person name="Nguyen N.B."/>
            <person name="Nickerson E."/>
            <person name="Nwaokelemeh O.O."/>
            <person name="Nwokenkwo S."/>
            <person name="Obregon M."/>
            <person name="Oguh M."/>
            <person name="Oragunye N."/>
            <person name="Oviedo R.J."/>
            <person name="Parish B.J."/>
            <person name="Parker D.N."/>
            <person name="Parrish J."/>
            <person name="Parks K.L."/>
            <person name="Paul H.A."/>
            <person name="Payton B.A."/>
            <person name="Perez A."/>
            <person name="Perrin W."/>
            <person name="Pickens A."/>
            <person name="Primus E.L."/>
            <person name="Pu L.-L."/>
            <person name="Puazo M."/>
            <person name="Quiles M.M."/>
            <person name="Quiroz J.B."/>
            <person name="Rabata D."/>
            <person name="Reeves K."/>
            <person name="Ruiz S.J."/>
            <person name="Shao H."/>
            <person name="Sisson I."/>
            <person name="Sonaike T."/>
            <person name="Sorelle R.P."/>
            <person name="Sutton A.E."/>
            <person name="Svatek A.F."/>
            <person name="Svetz L.A."/>
            <person name="Tamerisa K.S."/>
            <person name="Taylor T.R."/>
            <person name="Teague B."/>
            <person name="Thomas N."/>
            <person name="Thorn R.D."/>
            <person name="Trejos Z.Y."/>
            <person name="Trevino B.K."/>
            <person name="Ukegbu O.N."/>
            <person name="Urban J.B."/>
            <person name="Vasquez L.I."/>
            <person name="Vera V.A."/>
            <person name="Villasana D.M."/>
            <person name="Wang L."/>
            <person name="Ward-Moore S."/>
            <person name="Warren J.T."/>
            <person name="Wei X."/>
            <person name="White F."/>
            <person name="Williamson A.L."/>
            <person name="Wleczyk R."/>
            <person name="Wooden H.S."/>
            <person name="Wooden S.H."/>
            <person name="Yen J."/>
            <person name="Yoon L."/>
            <person name="Yoon V."/>
            <person name="Zorrilla S.E."/>
            <person name="Nelson D."/>
            <person name="Kucherlapati R."/>
            <person name="Weinstock G."/>
            <person name="Gibbs R.A."/>
        </authorList>
    </citation>
    <scope>NUCLEOTIDE SEQUENCE [LARGE SCALE GENOMIC DNA]</scope>
</reference>
<reference key="5">
    <citation type="journal article" date="2004" name="Genome Res.">
        <title>The status, quality, and expansion of the NIH full-length cDNA project: the Mammalian Gene Collection (MGC).</title>
        <authorList>
            <consortium name="The MGC Project Team"/>
        </authorList>
    </citation>
    <scope>NUCLEOTIDE SEQUENCE [LARGE SCALE MRNA] (ISOFORM 1)</scope>
    <source>
        <tissue>Uterus</tissue>
    </source>
</reference>